<accession>O14832</accession>
<accession>A8MTS8</accession>
<accession>B1ALH5</accession>
<feature type="transit peptide" description="Peroxisome" evidence="2">
    <location>
        <begin position="1"/>
        <end position="30"/>
    </location>
</feature>
<feature type="chain" id="PRO_0000024053" description="Phytanoyl-CoA dioxygenase, peroxisomal">
    <location>
        <begin position="31"/>
        <end position="338"/>
    </location>
</feature>
<feature type="binding site" evidence="11">
    <location>
        <position position="120"/>
    </location>
    <ligand>
        <name>2-oxoglutarate</name>
        <dbReference type="ChEBI" id="CHEBI:16810"/>
    </ligand>
</feature>
<feature type="binding site" evidence="11">
    <location>
        <position position="157"/>
    </location>
    <ligand>
        <name>2-oxoglutarate</name>
        <dbReference type="ChEBI" id="CHEBI:16810"/>
    </ligand>
</feature>
<feature type="binding site" evidence="11">
    <location>
        <begin position="175"/>
        <end position="177"/>
    </location>
    <ligand>
        <name>2-oxoglutarate</name>
        <dbReference type="ChEBI" id="CHEBI:16810"/>
    </ligand>
</feature>
<feature type="binding site" evidence="11">
    <location>
        <position position="175"/>
    </location>
    <ligand>
        <name>Fe cation</name>
        <dbReference type="ChEBI" id="CHEBI:24875"/>
    </ligand>
</feature>
<feature type="binding site" evidence="11">
    <location>
        <position position="177"/>
    </location>
    <ligand>
        <name>Fe cation</name>
        <dbReference type="ChEBI" id="CHEBI:24875"/>
    </ligand>
</feature>
<feature type="binding site" evidence="11">
    <location>
        <position position="193"/>
    </location>
    <ligand>
        <name>2-oxoglutarate</name>
        <dbReference type="ChEBI" id="CHEBI:16810"/>
    </ligand>
</feature>
<feature type="binding site" evidence="11">
    <location>
        <position position="264"/>
    </location>
    <ligand>
        <name>Fe cation</name>
        <dbReference type="ChEBI" id="CHEBI:24875"/>
    </ligand>
</feature>
<feature type="binding site" evidence="11">
    <location>
        <position position="266"/>
    </location>
    <ligand>
        <name>2-oxoglutarate</name>
        <dbReference type="ChEBI" id="CHEBI:16810"/>
    </ligand>
</feature>
<feature type="binding site" evidence="11">
    <location>
        <position position="275"/>
    </location>
    <ligand>
        <name>2-oxoglutarate</name>
        <dbReference type="ChEBI" id="CHEBI:16810"/>
    </ligand>
</feature>
<feature type="modified residue" description="N6-succinyllysine" evidence="1">
    <location>
        <position position="59"/>
    </location>
</feature>
<feature type="modified residue" description="N6-succinyllysine" evidence="1">
    <location>
        <position position="108"/>
    </location>
</feature>
<feature type="modified residue" description="N6-succinyllysine" evidence="1">
    <location>
        <position position="231"/>
    </location>
</feature>
<feature type="modified residue" description="N6-succinyllysine" evidence="1">
    <location>
        <position position="252"/>
    </location>
</feature>
<feature type="modified residue" description="Phosphoserine" evidence="20">
    <location>
        <position position="317"/>
    </location>
</feature>
<feature type="splice variant" id="VSP_046289" description="In isoform 2." evidence="15">
    <location>
        <begin position="1"/>
        <end position="100"/>
    </location>
</feature>
<feature type="sequence variant" id="VAR_017482" description="In dbSNP:rs28938169." evidence="7">
    <original>P</original>
    <variation>S</variation>
    <location>
        <position position="29"/>
    </location>
</feature>
<feature type="sequence variant" id="VAR_018619" description="In RD." evidence="10">
    <original>N</original>
    <variation>Y</variation>
    <location>
        <position position="83"/>
    </location>
</feature>
<feature type="sequence variant" id="VAR_017483" description="In RD; dbSNP:rs1835617888." evidence="7">
    <original>P</original>
    <variation>S</variation>
    <location>
        <position position="173"/>
    </location>
</feature>
<feature type="sequence variant" id="VAR_018631" description="In RD." evidence="10">
    <original>H</original>
    <variation>R</variation>
    <location>
        <position position="175"/>
    </location>
</feature>
<feature type="sequence variant" id="VAR_017484" description="In RD; dbSNP:rs28939672." evidence="7">
    <original>Q</original>
    <variation>K</variation>
    <location>
        <position position="176"/>
    </location>
</feature>
<feature type="sequence variant" id="VAR_017485" description="In RD; total loss of activity; dbSNP:rs770262329." evidence="7">
    <original>D</original>
    <variation>G</variation>
    <location>
        <position position="177"/>
    </location>
</feature>
<feature type="sequence variant" id="VAR_012980" description="In RD." evidence="7">
    <original>A</original>
    <variation>AA</variation>
    <location>
        <position position="192"/>
    </location>
</feature>
<feature type="sequence variant" id="VAR_017486" description="In RD." evidence="7">
    <original>W</original>
    <variation>R</variation>
    <location>
        <position position="193"/>
    </location>
</feature>
<feature type="sequence variant" id="VAR_017487" description="In RD." evidence="7">
    <original>E</original>
    <variation>Q</variation>
    <location>
        <position position="197"/>
    </location>
</feature>
<feature type="sequence variant" id="VAR_017488" description="In RD." evidence="7">
    <original>I</original>
    <variation>F</variation>
    <location>
        <position position="199"/>
    </location>
</feature>
<feature type="sequence variant" id="VAR_017489" description="In RD; total loss of activity; dbSNP:rs104894173." evidence="5 7">
    <original>G</original>
    <variation>S</variation>
    <location>
        <position position="204"/>
    </location>
</feature>
<feature type="sequence variant" id="VAR_050528" description="In dbSNP:rs7901902.">
    <original>G</original>
    <variation>S</variation>
    <location>
        <position position="215"/>
    </location>
</feature>
<feature type="sequence variant" id="VAR_017490" description="In RD; dbSNP:rs767216891." evidence="7">
    <original>H</original>
    <variation>Y</variation>
    <location>
        <position position="220"/>
    </location>
</feature>
<feature type="sequence variant" id="VAR_017491" description="In dbSNP:rs62619919." evidence="7 12">
    <original>R</original>
    <variation>Q</variation>
    <location>
        <position position="245"/>
    </location>
</feature>
<feature type="sequence variant" id="VAR_017492" description="In RD; dbSNP:rs1211564430." evidence="7">
    <original>F</original>
    <variation>S</variation>
    <location>
        <position position="257"/>
    </location>
</feature>
<feature type="sequence variant" id="VAR_005525" description="In RD; dbSNP:rs104894179." evidence="7 14">
    <original>N</original>
    <variation>H</variation>
    <location>
        <position position="269"/>
    </location>
</feature>
<feature type="sequence variant" id="VAR_017493" description="In RD; total loss of activity; dbSNP:rs104894174." evidence="7">
    <original>R</original>
    <variation>Q</variation>
    <location>
        <position position="275"/>
    </location>
</feature>
<feature type="sequence variant" id="VAR_005526" description="In RD; total loss of activity; dbSNP:rs104894178." evidence="7 13">
    <original>R</original>
    <variation>W</variation>
    <location>
        <position position="275"/>
    </location>
</feature>
<feature type="helix" evidence="21">
    <location>
        <begin position="57"/>
        <end position="64"/>
    </location>
</feature>
<feature type="strand" evidence="21">
    <location>
        <begin position="65"/>
        <end position="69"/>
    </location>
</feature>
<feature type="helix" evidence="21">
    <location>
        <begin position="75"/>
        <end position="89"/>
    </location>
</feature>
<feature type="strand" evidence="21">
    <location>
        <begin position="99"/>
        <end position="101"/>
    </location>
</feature>
<feature type="strand" evidence="21">
    <location>
        <begin position="104"/>
        <end position="106"/>
    </location>
</feature>
<feature type="strand" evidence="21">
    <location>
        <begin position="115"/>
        <end position="117"/>
    </location>
</feature>
<feature type="strand" evidence="21">
    <location>
        <begin position="120"/>
        <end position="122"/>
    </location>
</feature>
<feature type="helix" evidence="21">
    <location>
        <begin position="128"/>
        <end position="135"/>
    </location>
</feature>
<feature type="helix" evidence="21">
    <location>
        <begin position="137"/>
        <end position="147"/>
    </location>
</feature>
<feature type="strand" evidence="21">
    <location>
        <begin position="149"/>
        <end position="161"/>
    </location>
</feature>
<feature type="helix" evidence="21">
    <location>
        <begin position="177"/>
        <end position="180"/>
    </location>
</feature>
<feature type="helix" evidence="21">
    <location>
        <begin position="186"/>
        <end position="188"/>
    </location>
</feature>
<feature type="strand" evidence="21">
    <location>
        <begin position="189"/>
        <end position="197"/>
    </location>
</feature>
<feature type="strand" evidence="21">
    <location>
        <begin position="206"/>
        <end position="208"/>
    </location>
</feature>
<feature type="helix" evidence="21">
    <location>
        <begin position="212"/>
        <end position="214"/>
    </location>
</feature>
<feature type="strand" evidence="21">
    <location>
        <begin position="246"/>
        <end position="248"/>
    </location>
</feature>
<feature type="strand" evidence="21">
    <location>
        <begin position="255"/>
        <end position="258"/>
    </location>
</feature>
<feature type="strand" evidence="21">
    <location>
        <begin position="264"/>
        <end position="266"/>
    </location>
</feature>
<feature type="strand" evidence="21">
    <location>
        <begin position="271"/>
        <end position="273"/>
    </location>
</feature>
<feature type="strand" evidence="21">
    <location>
        <begin position="275"/>
        <end position="284"/>
    </location>
</feature>
<feature type="helix" evidence="21">
    <location>
        <begin position="296"/>
        <end position="301"/>
    </location>
</feature>
<feature type="helix" evidence="21">
    <location>
        <begin position="320"/>
        <end position="327"/>
    </location>
</feature>
<feature type="strand" evidence="21">
    <location>
        <begin position="329"/>
        <end position="333"/>
    </location>
</feature>
<dbReference type="EC" id="1.14.11.18" evidence="7 8 13"/>
<dbReference type="EMBL" id="AF023462">
    <property type="protein sequence ID" value="AAB81834.1"/>
    <property type="molecule type" value="mRNA"/>
</dbReference>
<dbReference type="EMBL" id="AF112977">
    <property type="protein sequence ID" value="AAD20602.1"/>
    <property type="molecule type" value="mRNA"/>
</dbReference>
<dbReference type="EMBL" id="AF242386">
    <property type="protein sequence ID" value="AAF74123.1"/>
    <property type="molecule type" value="Genomic_DNA"/>
</dbReference>
<dbReference type="EMBL" id="AF242379">
    <property type="protein sequence ID" value="AAF74123.1"/>
    <property type="status" value="JOINED"/>
    <property type="molecule type" value="Genomic_DNA"/>
</dbReference>
<dbReference type="EMBL" id="AF242380">
    <property type="protein sequence ID" value="AAF74123.1"/>
    <property type="status" value="JOINED"/>
    <property type="molecule type" value="Genomic_DNA"/>
</dbReference>
<dbReference type="EMBL" id="AF242381">
    <property type="protein sequence ID" value="AAF74123.1"/>
    <property type="status" value="JOINED"/>
    <property type="molecule type" value="Genomic_DNA"/>
</dbReference>
<dbReference type="EMBL" id="AF242382">
    <property type="protein sequence ID" value="AAF74123.1"/>
    <property type="status" value="JOINED"/>
    <property type="molecule type" value="Genomic_DNA"/>
</dbReference>
<dbReference type="EMBL" id="AF242383">
    <property type="protein sequence ID" value="AAF74123.1"/>
    <property type="status" value="JOINED"/>
    <property type="molecule type" value="Genomic_DNA"/>
</dbReference>
<dbReference type="EMBL" id="AF242384">
    <property type="protein sequence ID" value="AAF74123.1"/>
    <property type="status" value="JOINED"/>
    <property type="molecule type" value="Genomic_DNA"/>
</dbReference>
<dbReference type="EMBL" id="AF242385">
    <property type="protein sequence ID" value="AAF74123.1"/>
    <property type="status" value="JOINED"/>
    <property type="molecule type" value="Genomic_DNA"/>
</dbReference>
<dbReference type="EMBL" id="AL138764">
    <property type="status" value="NOT_ANNOTATED_CDS"/>
    <property type="molecule type" value="Genomic_DNA"/>
</dbReference>
<dbReference type="EMBL" id="BC029512">
    <property type="protein sequence ID" value="AAH29512.1"/>
    <property type="molecule type" value="mRNA"/>
</dbReference>
<dbReference type="CCDS" id="CCDS41489.1">
    <molecule id="O14832-2"/>
</dbReference>
<dbReference type="CCDS" id="CCDS7097.1">
    <molecule id="O14832-1"/>
</dbReference>
<dbReference type="RefSeq" id="NP_001032626.1">
    <molecule id="O14832-2"/>
    <property type="nucleotide sequence ID" value="NM_001037537.2"/>
</dbReference>
<dbReference type="RefSeq" id="NP_001310009.1">
    <molecule id="O14832-2"/>
    <property type="nucleotide sequence ID" value="NM_001323080.2"/>
</dbReference>
<dbReference type="RefSeq" id="NP_006205.1">
    <molecule id="O14832-1"/>
    <property type="nucleotide sequence ID" value="NM_006214.4"/>
</dbReference>
<dbReference type="PDB" id="2A1X">
    <property type="method" value="X-ray"/>
    <property type="resolution" value="2.50 A"/>
    <property type="chains" value="A=31-338"/>
</dbReference>
<dbReference type="PDBsum" id="2A1X"/>
<dbReference type="SMR" id="O14832"/>
<dbReference type="BioGRID" id="111282">
    <property type="interactions" value="25"/>
</dbReference>
<dbReference type="FunCoup" id="O14832">
    <property type="interactions" value="210"/>
</dbReference>
<dbReference type="IntAct" id="O14832">
    <property type="interactions" value="30"/>
</dbReference>
<dbReference type="STRING" id="9606.ENSP00000263038"/>
<dbReference type="DrugBank" id="DB00025">
    <property type="generic name" value="Antihemophilic factor, human recombinant"/>
</dbReference>
<dbReference type="DrugBank" id="DB00126">
    <property type="generic name" value="Ascorbic acid"/>
</dbReference>
<dbReference type="DrugBank" id="DB13998">
    <property type="generic name" value="Lonoctocog alfa"/>
</dbReference>
<dbReference type="DrugBank" id="DB13999">
    <property type="generic name" value="Moroctocog alfa"/>
</dbReference>
<dbReference type="SwissLipids" id="SLP:000001017"/>
<dbReference type="iPTMnet" id="O14832"/>
<dbReference type="PhosphoSitePlus" id="O14832"/>
<dbReference type="SwissPalm" id="O14832"/>
<dbReference type="BioMuta" id="PHYH"/>
<dbReference type="jPOST" id="O14832"/>
<dbReference type="MassIVE" id="O14832"/>
<dbReference type="PaxDb" id="9606-ENSP00000263038"/>
<dbReference type="PeptideAtlas" id="O14832"/>
<dbReference type="ProteomicsDB" id="2048"/>
<dbReference type="ProteomicsDB" id="48268">
    <molecule id="O14832-1"/>
</dbReference>
<dbReference type="Pumba" id="O14832"/>
<dbReference type="ABCD" id="O14832">
    <property type="antibodies" value="1 sequenced antibody"/>
</dbReference>
<dbReference type="Antibodypedia" id="1999">
    <property type="antibodies" value="434 antibodies from 34 providers"/>
</dbReference>
<dbReference type="DNASU" id="5264"/>
<dbReference type="Ensembl" id="ENST00000263038.9">
    <molecule id="O14832-1"/>
    <property type="protein sequence ID" value="ENSP00000263038.4"/>
    <property type="gene ID" value="ENSG00000107537.14"/>
</dbReference>
<dbReference type="Ensembl" id="ENST00000396913.6">
    <molecule id="O14832-2"/>
    <property type="protein sequence ID" value="ENSP00000380121.2"/>
    <property type="gene ID" value="ENSG00000107537.14"/>
</dbReference>
<dbReference type="GeneID" id="5264"/>
<dbReference type="KEGG" id="hsa:5264"/>
<dbReference type="MANE-Select" id="ENST00000263038.9">
    <property type="protein sequence ID" value="ENSP00000263038.4"/>
    <property type="RefSeq nucleotide sequence ID" value="NM_006214.4"/>
    <property type="RefSeq protein sequence ID" value="NP_006205.1"/>
</dbReference>
<dbReference type="UCSC" id="uc001ime.4">
    <molecule id="O14832-1"/>
    <property type="organism name" value="human"/>
</dbReference>
<dbReference type="AGR" id="HGNC:8940"/>
<dbReference type="CTD" id="5264"/>
<dbReference type="DisGeNET" id="5264"/>
<dbReference type="GeneCards" id="PHYH"/>
<dbReference type="GeneReviews" id="PHYH"/>
<dbReference type="HGNC" id="HGNC:8940">
    <property type="gene designation" value="PHYH"/>
</dbReference>
<dbReference type="HPA" id="ENSG00000107537">
    <property type="expression patterns" value="Tissue enhanced (liver, skeletal muscle, tongue)"/>
</dbReference>
<dbReference type="MalaCards" id="PHYH"/>
<dbReference type="MIM" id="266500">
    <property type="type" value="phenotype"/>
</dbReference>
<dbReference type="MIM" id="602026">
    <property type="type" value="gene"/>
</dbReference>
<dbReference type="neXtProt" id="NX_O14832"/>
<dbReference type="OpenTargets" id="ENSG00000107537"/>
<dbReference type="Orphanet" id="773">
    <property type="disease" value="Refsum disease"/>
</dbReference>
<dbReference type="PharmGKB" id="PA33280"/>
<dbReference type="VEuPathDB" id="HostDB:ENSG00000107537"/>
<dbReference type="eggNOG" id="KOG3290">
    <property type="taxonomic scope" value="Eukaryota"/>
</dbReference>
<dbReference type="GeneTree" id="ENSGT00390000001775"/>
<dbReference type="HOGENOM" id="CLU_060877_0_0_1"/>
<dbReference type="InParanoid" id="O14832"/>
<dbReference type="OMA" id="CCAWTAM"/>
<dbReference type="OrthoDB" id="2328924at2759"/>
<dbReference type="PAN-GO" id="O14832">
    <property type="GO annotations" value="2 GO annotations based on evolutionary models"/>
</dbReference>
<dbReference type="PhylomeDB" id="O14832"/>
<dbReference type="TreeFam" id="TF313667"/>
<dbReference type="BioCyc" id="MetaCyc:HS03003-MONOMER"/>
<dbReference type="BRENDA" id="1.14.11.18">
    <property type="organism ID" value="2681"/>
</dbReference>
<dbReference type="PathwayCommons" id="O14832"/>
<dbReference type="Reactome" id="R-HSA-389599">
    <property type="pathway name" value="Alpha-oxidation of phytanate"/>
</dbReference>
<dbReference type="Reactome" id="R-HSA-9033241">
    <property type="pathway name" value="Peroxisomal protein import"/>
</dbReference>
<dbReference type="Reactome" id="R-HSA-9033500">
    <property type="pathway name" value="TYSND1 cleaves peroxisomal proteins"/>
</dbReference>
<dbReference type="SignaLink" id="O14832"/>
<dbReference type="UniPathway" id="UPA00199"/>
<dbReference type="BioGRID-ORCS" id="5264">
    <property type="hits" value="13 hits in 1162 CRISPR screens"/>
</dbReference>
<dbReference type="ChiTaRS" id="PHYH">
    <property type="organism name" value="human"/>
</dbReference>
<dbReference type="EvolutionaryTrace" id="O14832"/>
<dbReference type="GenomeRNAi" id="5264"/>
<dbReference type="Pharos" id="O14832">
    <property type="development level" value="Tbio"/>
</dbReference>
<dbReference type="PRO" id="PR:O14832"/>
<dbReference type="Proteomes" id="UP000005640">
    <property type="component" value="Chromosome 10"/>
</dbReference>
<dbReference type="RNAct" id="O14832">
    <property type="molecule type" value="protein"/>
</dbReference>
<dbReference type="Bgee" id="ENSG00000107537">
    <property type="expression patterns" value="Expressed in vastus lateralis and 205 other cell types or tissues"/>
</dbReference>
<dbReference type="ExpressionAtlas" id="O14832">
    <property type="expression patterns" value="baseline and differential"/>
</dbReference>
<dbReference type="GO" id="GO:0097731">
    <property type="term" value="C:9+0 non-motile cilium"/>
    <property type="evidence" value="ECO:0000314"/>
    <property type="project" value="GO_Central"/>
</dbReference>
<dbReference type="GO" id="GO:0005829">
    <property type="term" value="C:cytosol"/>
    <property type="evidence" value="ECO:0000304"/>
    <property type="project" value="Reactome"/>
</dbReference>
<dbReference type="GO" id="GO:0005782">
    <property type="term" value="C:peroxisomal matrix"/>
    <property type="evidence" value="ECO:0000304"/>
    <property type="project" value="Reactome"/>
</dbReference>
<dbReference type="GO" id="GO:0005777">
    <property type="term" value="C:peroxisome"/>
    <property type="evidence" value="ECO:0000314"/>
    <property type="project" value="UniProtKB"/>
</dbReference>
<dbReference type="GO" id="GO:0031406">
    <property type="term" value="F:carboxylic acid binding"/>
    <property type="evidence" value="ECO:0000314"/>
    <property type="project" value="CAFA"/>
</dbReference>
<dbReference type="GO" id="GO:0008198">
    <property type="term" value="F:ferrous iron binding"/>
    <property type="evidence" value="ECO:0000314"/>
    <property type="project" value="UniProtKB"/>
</dbReference>
<dbReference type="GO" id="GO:0031418">
    <property type="term" value="F:L-ascorbic acid binding"/>
    <property type="evidence" value="ECO:0000314"/>
    <property type="project" value="UniProtKB"/>
</dbReference>
<dbReference type="GO" id="GO:0048244">
    <property type="term" value="F:phytanoyl-CoA dioxygenase activity"/>
    <property type="evidence" value="ECO:0000314"/>
    <property type="project" value="UniProtKB"/>
</dbReference>
<dbReference type="GO" id="GO:0019606">
    <property type="term" value="P:2-oxobutyrate catabolic process"/>
    <property type="evidence" value="ECO:0007669"/>
    <property type="project" value="Ensembl"/>
</dbReference>
<dbReference type="GO" id="GO:0006103">
    <property type="term" value="P:2-oxoglutarate metabolic process"/>
    <property type="evidence" value="ECO:0000314"/>
    <property type="project" value="CAFA"/>
</dbReference>
<dbReference type="GO" id="GO:0001561">
    <property type="term" value="P:fatty acid alpha-oxidation"/>
    <property type="evidence" value="ECO:0000314"/>
    <property type="project" value="UniProtKB"/>
</dbReference>
<dbReference type="GO" id="GO:0006720">
    <property type="term" value="P:isoprenoid metabolic process"/>
    <property type="evidence" value="ECO:0000314"/>
    <property type="project" value="UniProtKB"/>
</dbReference>
<dbReference type="GO" id="GO:0097089">
    <property type="term" value="P:methyl-branched fatty acid metabolic process"/>
    <property type="evidence" value="ECO:0000314"/>
    <property type="project" value="UniProtKB"/>
</dbReference>
<dbReference type="DisProt" id="DP00327"/>
<dbReference type="FunFam" id="2.60.120.620:FF:000012">
    <property type="entry name" value="Phytanoyl-CoA dioxygenase, peroxisomal"/>
    <property type="match status" value="1"/>
</dbReference>
<dbReference type="Gene3D" id="2.60.120.620">
    <property type="entry name" value="q2cbj1_9rhob like domain"/>
    <property type="match status" value="1"/>
</dbReference>
<dbReference type="InterPro" id="IPR047128">
    <property type="entry name" value="PhyH"/>
</dbReference>
<dbReference type="InterPro" id="IPR008775">
    <property type="entry name" value="Phytyl_CoA_dOase-like"/>
</dbReference>
<dbReference type="PANTHER" id="PTHR21308">
    <property type="entry name" value="PHYTANOYL-COA ALPHA-HYDROXYLASE"/>
    <property type="match status" value="1"/>
</dbReference>
<dbReference type="PANTHER" id="PTHR21308:SF1">
    <property type="entry name" value="PHYTANOYL-COA DIOXYGENASE, PEROXISOMAL"/>
    <property type="match status" value="1"/>
</dbReference>
<dbReference type="Pfam" id="PF05721">
    <property type="entry name" value="PhyH"/>
    <property type="match status" value="1"/>
</dbReference>
<dbReference type="SUPFAM" id="SSF51197">
    <property type="entry name" value="Clavaminate synthase-like"/>
    <property type="match status" value="1"/>
</dbReference>
<name>PAHX_HUMAN</name>
<comment type="function">
    <text evidence="6 8 9 13">Catalyzes the 2-hydroxylation of not only racemic phytanoyl-CoA and the isomers of 3-methylhexadecanoyl-CoA, but also a variety of other mono-branched 3-methylacyl-CoA esters (with a chain length of at least seven carbon atoms) and straight-chain acyl-CoA esters (with a chain length longer than four carbon atoms) (PubMed:10744784, PubMed:12031666, PubMed:12923223, PubMed:9326939). Does not hydroxylate long and very long straight chain acyl-CoAs or 2-methyl- and 4-methyl-branched acyl-CoAs (PubMed:10744784, PubMed:12923223).</text>
</comment>
<comment type="catalytic activity">
    <reaction evidence="7 8 13">
        <text>phytanoyl-CoA + 2-oxoglutarate + O2 = 2-hydroxyphytanoyl-CoA + succinate + CO2</text>
        <dbReference type="Rhea" id="RHEA:16065"/>
        <dbReference type="ChEBI" id="CHEBI:15379"/>
        <dbReference type="ChEBI" id="CHEBI:16526"/>
        <dbReference type="ChEBI" id="CHEBI:16810"/>
        <dbReference type="ChEBI" id="CHEBI:30031"/>
        <dbReference type="ChEBI" id="CHEBI:57334"/>
        <dbReference type="ChEBI" id="CHEBI:57391"/>
        <dbReference type="EC" id="1.14.11.18"/>
    </reaction>
    <physiologicalReaction direction="left-to-right" evidence="17 19">
        <dbReference type="Rhea" id="RHEA:16066"/>
    </physiologicalReaction>
</comment>
<comment type="catalytic activity">
    <reaction evidence="6 9">
        <text>3-methylhexadecanoyl-CoA + 2-oxoglutarate + O2 = 2-hydroxy-3-methylhexadecanoyl-CoA + succinate + CO2</text>
        <dbReference type="Rhea" id="RHEA:44000"/>
        <dbReference type="ChEBI" id="CHEBI:15379"/>
        <dbReference type="ChEBI" id="CHEBI:16526"/>
        <dbReference type="ChEBI" id="CHEBI:16810"/>
        <dbReference type="ChEBI" id="CHEBI:30031"/>
        <dbReference type="ChEBI" id="CHEBI:58784"/>
        <dbReference type="ChEBI" id="CHEBI:83969"/>
    </reaction>
    <physiologicalReaction direction="left-to-right" evidence="16 18">
        <dbReference type="Rhea" id="RHEA:44001"/>
    </physiologicalReaction>
</comment>
<comment type="catalytic activity">
    <reaction evidence="8">
        <text>hexadecanoyl-CoA + 2-oxoglutarate + O2 = 2-hydroxyhexadecanoyl-CoA + succinate + CO2</text>
        <dbReference type="Rhea" id="RHEA:54596"/>
        <dbReference type="ChEBI" id="CHEBI:15379"/>
        <dbReference type="ChEBI" id="CHEBI:16526"/>
        <dbReference type="ChEBI" id="CHEBI:16810"/>
        <dbReference type="ChEBI" id="CHEBI:30031"/>
        <dbReference type="ChEBI" id="CHEBI:57379"/>
        <dbReference type="ChEBI" id="CHEBI:74115"/>
    </reaction>
    <physiologicalReaction direction="left-to-right" evidence="17">
        <dbReference type="Rhea" id="RHEA:54597"/>
    </physiologicalReaction>
</comment>
<comment type="catalytic activity">
    <reaction evidence="8">
        <text>octanoyl-CoA + 2-oxoglutarate + O2 = 2-hydroxyoctanoyl-CoA + succinate + CO2</text>
        <dbReference type="Rhea" id="RHEA:54600"/>
        <dbReference type="ChEBI" id="CHEBI:15379"/>
        <dbReference type="ChEBI" id="CHEBI:16526"/>
        <dbReference type="ChEBI" id="CHEBI:16810"/>
        <dbReference type="ChEBI" id="CHEBI:30031"/>
        <dbReference type="ChEBI" id="CHEBI:57386"/>
        <dbReference type="ChEBI" id="CHEBI:138290"/>
    </reaction>
    <physiologicalReaction direction="left-to-right" evidence="17">
        <dbReference type="Rhea" id="RHEA:54601"/>
    </physiologicalReaction>
</comment>
<comment type="catalytic activity">
    <reaction evidence="8">
        <text>decanoyl-CoA + 2-oxoglutarate + O2 = 2-hydroxydecanoyl-CoA + succinate + CO2</text>
        <dbReference type="Rhea" id="RHEA:54604"/>
        <dbReference type="ChEBI" id="CHEBI:15379"/>
        <dbReference type="ChEBI" id="CHEBI:16526"/>
        <dbReference type="ChEBI" id="CHEBI:16810"/>
        <dbReference type="ChEBI" id="CHEBI:30031"/>
        <dbReference type="ChEBI" id="CHEBI:61430"/>
        <dbReference type="ChEBI" id="CHEBI:138292"/>
    </reaction>
    <physiologicalReaction direction="left-to-right" evidence="17">
        <dbReference type="Rhea" id="RHEA:54605"/>
    </physiologicalReaction>
</comment>
<comment type="catalytic activity">
    <reaction evidence="8">
        <text>3-methylbutanoyl-CoA + 2-oxoglutarate + O2 = 2-hydroxy-3-methylbutanoyl-CoA + succinate + CO2</text>
        <dbReference type="Rhea" id="RHEA:54612"/>
        <dbReference type="ChEBI" id="CHEBI:15379"/>
        <dbReference type="ChEBI" id="CHEBI:16526"/>
        <dbReference type="ChEBI" id="CHEBI:16810"/>
        <dbReference type="ChEBI" id="CHEBI:30031"/>
        <dbReference type="ChEBI" id="CHEBI:57345"/>
        <dbReference type="ChEBI" id="CHEBI:138296"/>
    </reaction>
    <physiologicalReaction direction="left-to-right" evidence="17">
        <dbReference type="Rhea" id="RHEA:54613"/>
    </physiologicalReaction>
</comment>
<comment type="catalytic activity">
    <reaction evidence="8">
        <text>heptadecanoyl-CoA + 2-oxoglutarate + O2 = 2-hydroxyheptadecanoyl-CoA + succinate + CO2</text>
        <dbReference type="Rhea" id="RHEA:54616"/>
        <dbReference type="ChEBI" id="CHEBI:15379"/>
        <dbReference type="ChEBI" id="CHEBI:16526"/>
        <dbReference type="ChEBI" id="CHEBI:16810"/>
        <dbReference type="ChEBI" id="CHEBI:30031"/>
        <dbReference type="ChEBI" id="CHEBI:74307"/>
        <dbReference type="ChEBI" id="CHEBI:138297"/>
    </reaction>
    <physiologicalReaction direction="left-to-right" evidence="17">
        <dbReference type="Rhea" id="RHEA:54617"/>
    </physiologicalReaction>
</comment>
<comment type="catalytic activity">
    <reaction evidence="8">
        <text>eicosanoyl-CoA + 2-oxoglutarate + O2 = 2-hydroxyeicosanoyl-CoA + succinate + CO2</text>
        <dbReference type="Rhea" id="RHEA:54620"/>
        <dbReference type="ChEBI" id="CHEBI:15379"/>
        <dbReference type="ChEBI" id="CHEBI:16526"/>
        <dbReference type="ChEBI" id="CHEBI:16810"/>
        <dbReference type="ChEBI" id="CHEBI:30031"/>
        <dbReference type="ChEBI" id="CHEBI:57380"/>
        <dbReference type="ChEBI" id="CHEBI:138298"/>
    </reaction>
    <physiologicalReaction direction="left-to-right" evidence="17">
        <dbReference type="Rhea" id="RHEA:54621"/>
    </physiologicalReaction>
</comment>
<comment type="catalytic activity">
    <reaction evidence="8">
        <text>octadecanoyl-CoA + 2-oxoglutarate + O2 = 2-hydroxyoctadecanoyl-CoA + succinate + CO2</text>
        <dbReference type="Rhea" id="RHEA:54624"/>
        <dbReference type="ChEBI" id="CHEBI:15379"/>
        <dbReference type="ChEBI" id="CHEBI:16526"/>
        <dbReference type="ChEBI" id="CHEBI:16810"/>
        <dbReference type="ChEBI" id="CHEBI:30031"/>
        <dbReference type="ChEBI" id="CHEBI:57394"/>
        <dbReference type="ChEBI" id="CHEBI:74116"/>
    </reaction>
    <physiologicalReaction direction="left-to-right" evidence="17">
        <dbReference type="Rhea" id="RHEA:54625"/>
    </physiologicalReaction>
</comment>
<comment type="catalytic activity">
    <reaction evidence="8">
        <text>dodecanoyl-CoA + 2-oxoglutarate + O2 = 2-hydroxydodecanoyl-CoA + succinate + CO2</text>
        <dbReference type="Rhea" id="RHEA:54628"/>
        <dbReference type="ChEBI" id="CHEBI:15379"/>
        <dbReference type="ChEBI" id="CHEBI:16526"/>
        <dbReference type="ChEBI" id="CHEBI:16810"/>
        <dbReference type="ChEBI" id="CHEBI:30031"/>
        <dbReference type="ChEBI" id="CHEBI:57375"/>
        <dbReference type="ChEBI" id="CHEBI:138299"/>
    </reaction>
    <physiologicalReaction direction="left-to-right" evidence="17">
        <dbReference type="Rhea" id="RHEA:54629"/>
    </physiologicalReaction>
</comment>
<comment type="catalytic activity">
    <reaction evidence="8">
        <text>tetradecanoyl-CoA + 2-oxoglutarate + O2 = 2-hydroxytetradecanoyl-CoA + succinate + CO2</text>
        <dbReference type="Rhea" id="RHEA:54632"/>
        <dbReference type="ChEBI" id="CHEBI:15379"/>
        <dbReference type="ChEBI" id="CHEBI:16526"/>
        <dbReference type="ChEBI" id="CHEBI:16810"/>
        <dbReference type="ChEBI" id="CHEBI:30031"/>
        <dbReference type="ChEBI" id="CHEBI:57385"/>
        <dbReference type="ChEBI" id="CHEBI:138300"/>
    </reaction>
    <physiologicalReaction direction="left-to-right" evidence="17">
        <dbReference type="Rhea" id="RHEA:54633"/>
    </physiologicalReaction>
</comment>
<comment type="catalytic activity">
    <reaction evidence="8">
        <text>hexanoyl-CoA + 2-oxoglutarate + O2 = 2-hydroxyhexanoyl-CoA + succinate + CO2</text>
        <dbReference type="Rhea" id="RHEA:55172"/>
        <dbReference type="ChEBI" id="CHEBI:15379"/>
        <dbReference type="ChEBI" id="CHEBI:16526"/>
        <dbReference type="ChEBI" id="CHEBI:16810"/>
        <dbReference type="ChEBI" id="CHEBI:30031"/>
        <dbReference type="ChEBI" id="CHEBI:62620"/>
        <dbReference type="ChEBI" id="CHEBI:138630"/>
    </reaction>
    <physiologicalReaction direction="left-to-right" evidence="17">
        <dbReference type="Rhea" id="RHEA:55173"/>
    </physiologicalReaction>
</comment>
<comment type="catalytic activity">
    <reaction evidence="8">
        <text>butanoyl-CoA + 2-oxoglutarate + O2 = 2-hydroxybutanoyl-CoA + succinate + CO2</text>
        <dbReference type="Rhea" id="RHEA:55176"/>
        <dbReference type="ChEBI" id="CHEBI:15379"/>
        <dbReference type="ChEBI" id="CHEBI:16526"/>
        <dbReference type="ChEBI" id="CHEBI:16810"/>
        <dbReference type="ChEBI" id="CHEBI:30031"/>
        <dbReference type="ChEBI" id="CHEBI:57371"/>
        <dbReference type="ChEBI" id="CHEBI:138628"/>
    </reaction>
    <physiologicalReaction direction="left-to-right" evidence="17">
        <dbReference type="Rhea" id="RHEA:55177"/>
    </physiologicalReaction>
</comment>
<comment type="catalytic activity">
    <reaction evidence="9">
        <text>3-methylnonanoyl-CoA + 2-oxoglutarate + O2 = 2-hydroxy-3-methylnonanoyl-CoA + succinate + CO2</text>
        <dbReference type="Rhea" id="RHEA:55180"/>
        <dbReference type="ChEBI" id="CHEBI:15379"/>
        <dbReference type="ChEBI" id="CHEBI:16526"/>
        <dbReference type="ChEBI" id="CHEBI:16810"/>
        <dbReference type="ChEBI" id="CHEBI:30031"/>
        <dbReference type="ChEBI" id="CHEBI:138633"/>
        <dbReference type="ChEBI" id="CHEBI:138634"/>
    </reaction>
    <physiologicalReaction direction="left-to-right" evidence="18">
        <dbReference type="Rhea" id="RHEA:55181"/>
    </physiologicalReaction>
</comment>
<comment type="catalytic activity">
    <reaction evidence="9">
        <text>3-methylundecanoyl-CoA + 2-oxoglutarate + O2 = 2-hydroxy-3-methylundecanoyl-CoA + succinate + CO2</text>
        <dbReference type="Rhea" id="RHEA:55184"/>
        <dbReference type="ChEBI" id="CHEBI:15379"/>
        <dbReference type="ChEBI" id="CHEBI:16526"/>
        <dbReference type="ChEBI" id="CHEBI:16810"/>
        <dbReference type="ChEBI" id="CHEBI:30031"/>
        <dbReference type="ChEBI" id="CHEBI:84183"/>
        <dbReference type="ChEBI" id="CHEBI:138632"/>
    </reaction>
    <physiologicalReaction direction="left-to-right" evidence="18">
        <dbReference type="Rhea" id="RHEA:55185"/>
    </physiologicalReaction>
</comment>
<comment type="catalytic activity">
    <reaction evidence="9">
        <text>3-methyldodecanoyl-CoA + 2-oxoglutarate + O2 = 2-hydroxy-3-methyldodecanoyl-CoA + succinate + CO2</text>
        <dbReference type="Rhea" id="RHEA:55192"/>
        <dbReference type="ChEBI" id="CHEBI:15379"/>
        <dbReference type="ChEBI" id="CHEBI:16526"/>
        <dbReference type="ChEBI" id="CHEBI:16810"/>
        <dbReference type="ChEBI" id="CHEBI:30031"/>
        <dbReference type="ChEBI" id="CHEBI:138636"/>
        <dbReference type="ChEBI" id="CHEBI:138637"/>
    </reaction>
    <physiologicalReaction direction="left-to-right" evidence="18">
        <dbReference type="Rhea" id="RHEA:55193"/>
    </physiologicalReaction>
</comment>
<comment type="cofactor">
    <cofactor evidence="6 11 13">
        <name>Fe cation</name>
        <dbReference type="ChEBI" id="CHEBI:24875"/>
    </cofactor>
</comment>
<comment type="cofactor">
    <cofactor evidence="6 11">
        <name>L-ascorbate</name>
        <dbReference type="ChEBI" id="CHEBI:38290"/>
    </cofactor>
</comment>
<comment type="cofactor">
    <cofactor evidence="6">
        <name>ATP</name>
        <dbReference type="ChEBI" id="CHEBI:30616"/>
    </cofactor>
</comment>
<comment type="cofactor">
    <cofactor evidence="6">
        <name>Mg(2+)</name>
        <dbReference type="ChEBI" id="CHEBI:18420"/>
    </cofactor>
</comment>
<comment type="biophysicochemical properties">
    <kinetics>
        <KM evidence="9">40.8 uM for 3-methylhexadecanoyl-CoA</KM>
        <KM evidence="8">29.5 uM for phytanoyl-CoA (in presence of SCP2)</KM>
        <KM evidence="8">29.1 uM for hexadecanoyl-CoA (in presence of SCP2)</KM>
    </kinetics>
</comment>
<comment type="pathway">
    <text>Lipid metabolism; fatty acid metabolism.</text>
</comment>
<comment type="subunit">
    <text evidence="3 4">Interacts with FKBP52 (PubMed:10051602). Interacts with PHYHIP.</text>
</comment>
<comment type="interaction">
    <interactant intactId="EBI-721853">
        <id>O14832</id>
    </interactant>
    <interactant intactId="EBI-22011868">
        <id>Q6PCB6</id>
        <label>ABHD17C</label>
    </interactant>
    <organismsDiffer>false</organismsDiffer>
    <experiments>3</experiments>
</comment>
<comment type="interaction">
    <interactant intactId="EBI-721853">
        <id>O14832</id>
    </interactant>
    <interactant intactId="EBI-9089489">
        <id>Q96FT7-4</id>
        <label>ASIC4</label>
    </interactant>
    <organismsDiffer>false</organismsDiffer>
    <experiments>3</experiments>
</comment>
<comment type="interaction">
    <interactant intactId="EBI-721853">
        <id>O14832</id>
    </interactant>
    <interactant intactId="EBI-396137">
        <id>Q9UJX2</id>
        <label>CDC23</label>
    </interactant>
    <organismsDiffer>false</organismsDiffer>
    <experiments>3</experiments>
</comment>
<comment type="interaction">
    <interactant intactId="EBI-721853">
        <id>O14832</id>
    </interactant>
    <interactant intactId="EBI-350590">
        <id>Q9UNS2</id>
        <label>COPS3</label>
    </interactant>
    <organismsDiffer>false</organismsDiffer>
    <experiments>3</experiments>
</comment>
<comment type="interaction">
    <interactant intactId="EBI-721853">
        <id>O14832</id>
    </interactant>
    <interactant intactId="EBI-2872414">
        <id>Q8IUI8</id>
        <label>CRLF3</label>
    </interactant>
    <organismsDiffer>false</organismsDiffer>
    <experiments>3</experiments>
</comment>
<comment type="interaction">
    <interactant intactId="EBI-721853">
        <id>O14832</id>
    </interactant>
    <interactant intactId="EBI-2870947">
        <id>Q3B7T1</id>
        <label>EDRF1</label>
    </interactant>
    <organismsDiffer>false</organismsDiffer>
    <experiments>3</experiments>
</comment>
<comment type="interaction">
    <interactant intactId="EBI-721853">
        <id>O14832</id>
    </interactant>
    <interactant intactId="EBI-25838727">
        <id>P29323-3</id>
        <label>EPHB2</label>
    </interactant>
    <organismsDiffer>false</organismsDiffer>
    <experiments>3</experiments>
</comment>
<comment type="interaction">
    <interactant intactId="EBI-721853">
        <id>O14832</id>
    </interactant>
    <interactant intactId="EBI-10175124">
        <id>Q8IZU0</id>
        <label>FAM9B</label>
    </interactant>
    <organismsDiffer>false</organismsDiffer>
    <experiments>7</experiments>
</comment>
<comment type="interaction">
    <interactant intactId="EBI-721853">
        <id>O14832</id>
    </interactant>
    <interactant intactId="EBI-12035052">
        <id>A5PKX9</id>
        <label>INADL</label>
    </interactant>
    <organismsDiffer>false</organismsDiffer>
    <experiments>3</experiments>
</comment>
<comment type="interaction">
    <interactant intactId="EBI-721853">
        <id>O14832</id>
    </interactant>
    <interactant intactId="EBI-714379">
        <id>Q9Y2M5</id>
        <label>KLHL20</label>
    </interactant>
    <organismsDiffer>false</organismsDiffer>
    <experiments>3</experiments>
</comment>
<comment type="interaction">
    <interactant intactId="EBI-721853">
        <id>O14832</id>
    </interactant>
    <interactant intactId="EBI-10258746">
        <id>Q9UPM6</id>
        <label>LHX6</label>
    </interactant>
    <organismsDiffer>false</organismsDiffer>
    <experiments>3</experiments>
</comment>
<comment type="interaction">
    <interactant intactId="EBI-721853">
        <id>O14832</id>
    </interactant>
    <interactant intactId="EBI-739552">
        <id>P43364</id>
        <label>MAGEA11</label>
    </interactant>
    <organismsDiffer>false</organismsDiffer>
    <experiments>4</experiments>
</comment>
<comment type="interaction">
    <interactant intactId="EBI-721853">
        <id>O14832</id>
    </interactant>
    <interactant intactId="EBI-12056869">
        <id>Q9UDY8-2</id>
        <label>MALT1</label>
    </interactant>
    <organismsDiffer>false</organismsDiffer>
    <experiments>3</experiments>
</comment>
<comment type="interaction">
    <interactant intactId="EBI-721853">
        <id>O14832</id>
    </interactant>
    <interactant intactId="EBI-25830200">
        <id>Q6GQQ9-2</id>
        <label>OTUD7B</label>
    </interactant>
    <organismsDiffer>false</organismsDiffer>
    <experiments>3</experiments>
</comment>
<comment type="interaction">
    <interactant intactId="EBI-721853">
        <id>O14832</id>
    </interactant>
    <interactant intactId="EBI-629434">
        <id>O75925</id>
        <label>PIAS1</label>
    </interactant>
    <organismsDiffer>false</organismsDiffer>
    <experiments>3</experiments>
</comment>
<comment type="interaction">
    <interactant intactId="EBI-721853">
        <id>O14832</id>
    </interactant>
    <interactant intactId="EBI-25829984">
        <id>Q9ULX5</id>
        <label>RNF112</label>
    </interactant>
    <organismsDiffer>false</organismsDiffer>
    <experiments>3</experiments>
</comment>
<comment type="interaction">
    <interactant intactId="EBI-721853">
        <id>O14832</id>
    </interactant>
    <interactant intactId="EBI-10174456">
        <id>Q8N865</id>
        <label>SPMIP4</label>
    </interactant>
    <organismsDiffer>false</organismsDiffer>
    <experiments>3</experiments>
</comment>
<comment type="interaction">
    <interactant intactId="EBI-721853">
        <id>O14832</id>
    </interactant>
    <interactant intactId="EBI-523498">
        <id>O00463</id>
        <label>TRAF5</label>
    </interactant>
    <organismsDiffer>false</organismsDiffer>
    <experiments>3</experiments>
</comment>
<comment type="interaction">
    <interactant intactId="EBI-721853">
        <id>O14832</id>
    </interactant>
    <interactant intactId="EBI-10259086">
        <id>Q86UV6-2</id>
        <label>TRIM74</label>
    </interactant>
    <organismsDiffer>false</organismsDiffer>
    <experiments>3</experiments>
</comment>
<comment type="subcellular location">
    <subcellularLocation>
        <location evidence="13">Peroxisome</location>
    </subcellularLocation>
</comment>
<comment type="alternative products">
    <event type="alternative splicing"/>
    <isoform>
        <id>O14832-1</id>
        <name>1</name>
        <sequence type="displayed"/>
    </isoform>
    <isoform>
        <id>O14832-2</id>
        <name>2</name>
        <sequence type="described" ref="VSP_046289"/>
    </isoform>
</comment>
<comment type="tissue specificity">
    <text>Expressed in liver, kidney, and T-cells, but not in spleen, brain, heart, lung and skeletal muscle.</text>
</comment>
<comment type="disease" evidence="5 7 10 13 14">
    <disease id="DI-00966">
        <name>Refsum disease</name>
        <acronym>RD</acronym>
        <description>A rare autosomal recessive peroxisomal disorder characterized by the accumulation of the branched-chain fatty acid, phytanic acid, in blood and tissues. Cardinal clinical features are retinitis pigmentosa, peripheral neuropathy, cerebellar ataxia, and elevated protein levels in the cerebrospinal fluid (CSF). Half of all patients exhibit generalized, mild to moderate ichthyosis resembling ichthyosis vulgaris. Less constant features are nerve deafness, anosmia, skeletal abnormalities, cataracts and cardiac impairment.</description>
        <dbReference type="MIM" id="266500"/>
    </disease>
    <text>The disease is caused by variants affecting the gene represented in this entry.</text>
</comment>
<comment type="similarity">
    <text evidence="15">Belongs to the PhyH family.</text>
</comment>
<reference key="1">
    <citation type="journal article" date="1997" name="Nat. Genet.">
        <title>Identification of PAHX, a Refsum disease gene.</title>
        <authorList>
            <person name="Mihalik S.J."/>
            <person name="Morrell J.C."/>
            <person name="Kim D."/>
            <person name="Sachsteder K.A."/>
            <person name="Watkins P.A."/>
            <person name="Gould S.J."/>
        </authorList>
    </citation>
    <scope>NUCLEOTIDE SEQUENCE [MRNA] (ISOFORM 1)</scope>
    <scope>VARIANT RD TRP-275</scope>
    <scope>CHARACTERIZATION OF VARIANT RD TRP-275</scope>
    <scope>FUNCTION</scope>
    <scope>CATALYTIC ACTIVITY</scope>
    <scope>SUBCELLULAR LOCATION</scope>
    <scope>COFACTOR</scope>
</reference>
<reference key="2">
    <citation type="journal article" date="1997" name="Nat. Genet.">
        <title>Refsum disease is caused by mutations in the phytanoyl-CoA hydroxylase gene.</title>
        <authorList>
            <person name="Jansen G.A."/>
            <person name="Ofman R."/>
            <person name="Ferdinandusse S."/>
            <person name="Ijlst L."/>
            <person name="Muijsers A.O."/>
            <person name="Skjeldal O.H."/>
            <person name="Stokke O."/>
            <person name="Jakobs C."/>
            <person name="Besley G.T.N."/>
            <person name="Wraith J.E."/>
            <person name="Wanders R.J.A."/>
        </authorList>
    </citation>
    <scope>NUCLEOTIDE SEQUENCE [MRNA] (ISOFORM 1)</scope>
    <scope>VARIANT RD HIS-269</scope>
</reference>
<reference key="3">
    <citation type="journal article" date="1999" name="Proc. Natl. Acad. Sci. U.S.A.">
        <title>Immunophilins, Refsum disease, and lupus nephritis: the peroxisomal enzyme phytanoyl-CoA alpha-hydroxylase is a new FKBP-associated protein.</title>
        <authorList>
            <person name="Chambraud B."/>
            <person name="Radanyi C."/>
            <person name="Camonis J.H."/>
            <person name="Rajkowski K."/>
            <person name="Schumacher M."/>
            <person name="Baulieu E.-E."/>
        </authorList>
    </citation>
    <scope>NUCLEOTIDE SEQUENCE [MRNA] (ISOFORM 1)</scope>
    <scope>INTERACTION WITH FKBP52</scope>
    <source>
        <tissue>Leukemia</tissue>
    </source>
</reference>
<reference key="4">
    <citation type="journal article" date="2000" name="Hum. Mol. Genet.">
        <title>Human phytanoyl-CoA hydroxylase: resolution of the gene structure and the molecular basis of Refsum's disease.</title>
        <authorList>
            <person name="Jansen G.A."/>
            <person name="Hogenhout E.M."/>
            <person name="Ferdinandusse S."/>
            <person name="Waterham H.R."/>
            <person name="Ofman R."/>
            <person name="Jakobs C."/>
            <person name="Skjeldal O.H."/>
            <person name="Wanders R.J.A."/>
        </authorList>
    </citation>
    <scope>NUCLEOTIDE SEQUENCE [GENOMIC DNA]</scope>
    <scope>VARIANTS RD SER-173; LYS-176; GLY-177; ALA-192 INS; ARG-193; GLN-197; PHE-199; SER-204; TYR-220; SER-257; HIS-269; GLN-275 AND TRP-275</scope>
    <scope>VARIANTS SER-29 AND GLN-245</scope>
    <scope>CHARACTERIZATION OF VARIANTS RD GLY-177; SER-204; GLN-275 AND TRP-275</scope>
    <scope>CATALYTIC ACTIVITY</scope>
</reference>
<reference key="5">
    <citation type="journal article" date="2004" name="Nature">
        <title>The DNA sequence and comparative analysis of human chromosome 10.</title>
        <authorList>
            <person name="Deloukas P."/>
            <person name="Earthrowl M.E."/>
            <person name="Grafham D.V."/>
            <person name="Rubenfield M."/>
            <person name="French L."/>
            <person name="Steward C.A."/>
            <person name="Sims S.K."/>
            <person name="Jones M.C."/>
            <person name="Searle S."/>
            <person name="Scott C."/>
            <person name="Howe K."/>
            <person name="Hunt S.E."/>
            <person name="Andrews T.D."/>
            <person name="Gilbert J.G.R."/>
            <person name="Swarbreck D."/>
            <person name="Ashurst J.L."/>
            <person name="Taylor A."/>
            <person name="Battles J."/>
            <person name="Bird C.P."/>
            <person name="Ainscough R."/>
            <person name="Almeida J.P."/>
            <person name="Ashwell R.I.S."/>
            <person name="Ambrose K.D."/>
            <person name="Babbage A.K."/>
            <person name="Bagguley C.L."/>
            <person name="Bailey J."/>
            <person name="Banerjee R."/>
            <person name="Bates K."/>
            <person name="Beasley H."/>
            <person name="Bray-Allen S."/>
            <person name="Brown A.J."/>
            <person name="Brown J.Y."/>
            <person name="Burford D.C."/>
            <person name="Burrill W."/>
            <person name="Burton J."/>
            <person name="Cahill P."/>
            <person name="Camire D."/>
            <person name="Carter N.P."/>
            <person name="Chapman J.C."/>
            <person name="Clark S.Y."/>
            <person name="Clarke G."/>
            <person name="Clee C.M."/>
            <person name="Clegg S."/>
            <person name="Corby N."/>
            <person name="Coulson A."/>
            <person name="Dhami P."/>
            <person name="Dutta I."/>
            <person name="Dunn M."/>
            <person name="Faulkner L."/>
            <person name="Frankish A."/>
            <person name="Frankland J.A."/>
            <person name="Garner P."/>
            <person name="Garnett J."/>
            <person name="Gribble S."/>
            <person name="Griffiths C."/>
            <person name="Grocock R."/>
            <person name="Gustafson E."/>
            <person name="Hammond S."/>
            <person name="Harley J.L."/>
            <person name="Hart E."/>
            <person name="Heath P.D."/>
            <person name="Ho T.P."/>
            <person name="Hopkins B."/>
            <person name="Horne J."/>
            <person name="Howden P.J."/>
            <person name="Huckle E."/>
            <person name="Hynds C."/>
            <person name="Johnson C."/>
            <person name="Johnson D."/>
            <person name="Kana A."/>
            <person name="Kay M."/>
            <person name="Kimberley A.M."/>
            <person name="Kershaw J.K."/>
            <person name="Kokkinaki M."/>
            <person name="Laird G.K."/>
            <person name="Lawlor S."/>
            <person name="Lee H.M."/>
            <person name="Leongamornlert D.A."/>
            <person name="Laird G."/>
            <person name="Lloyd C."/>
            <person name="Lloyd D.M."/>
            <person name="Loveland J."/>
            <person name="Lovell J."/>
            <person name="McLaren S."/>
            <person name="McLay K.E."/>
            <person name="McMurray A."/>
            <person name="Mashreghi-Mohammadi M."/>
            <person name="Matthews L."/>
            <person name="Milne S."/>
            <person name="Nickerson T."/>
            <person name="Nguyen M."/>
            <person name="Overton-Larty E."/>
            <person name="Palmer S.A."/>
            <person name="Pearce A.V."/>
            <person name="Peck A.I."/>
            <person name="Pelan S."/>
            <person name="Phillimore B."/>
            <person name="Porter K."/>
            <person name="Rice C.M."/>
            <person name="Rogosin A."/>
            <person name="Ross M.T."/>
            <person name="Sarafidou T."/>
            <person name="Sehra H.K."/>
            <person name="Shownkeen R."/>
            <person name="Skuce C.D."/>
            <person name="Smith M."/>
            <person name="Standring L."/>
            <person name="Sycamore N."/>
            <person name="Tester J."/>
            <person name="Thorpe A."/>
            <person name="Torcasso W."/>
            <person name="Tracey A."/>
            <person name="Tromans A."/>
            <person name="Tsolas J."/>
            <person name="Wall M."/>
            <person name="Walsh J."/>
            <person name="Wang H."/>
            <person name="Weinstock K."/>
            <person name="West A.P."/>
            <person name="Willey D.L."/>
            <person name="Whitehead S.L."/>
            <person name="Wilming L."/>
            <person name="Wray P.W."/>
            <person name="Young L."/>
            <person name="Chen Y."/>
            <person name="Lovering R.C."/>
            <person name="Moschonas N.K."/>
            <person name="Siebert R."/>
            <person name="Fechtel K."/>
            <person name="Bentley D."/>
            <person name="Durbin R.M."/>
            <person name="Hubbard T."/>
            <person name="Doucette-Stamm L."/>
            <person name="Beck S."/>
            <person name="Smith D.R."/>
            <person name="Rogers J."/>
        </authorList>
    </citation>
    <scope>NUCLEOTIDE SEQUENCE [LARGE SCALE GENOMIC DNA]</scope>
</reference>
<reference key="6">
    <citation type="journal article" date="2004" name="Genome Res.">
        <title>The status, quality, and expansion of the NIH full-length cDNA project: the Mammalian Gene Collection (MGC).</title>
        <authorList>
            <consortium name="The MGC Project Team"/>
        </authorList>
    </citation>
    <scope>NUCLEOTIDE SEQUENCE [LARGE SCALE MRNA] (ISOFORM 1)</scope>
    <source>
        <tissue>Brain</tissue>
    </source>
</reference>
<reference key="7">
    <citation type="journal article" date="2000" name="Brain Res. Mol. Brain Res.">
        <title>Identification of a brain specific protein that associates with a Refsum disease gene product, phytanoyl-CoA alpha-hydroxylase.</title>
        <authorList>
            <person name="Lee Z.H."/>
            <person name="Kim H.-H."/>
            <person name="Ahn K.Y."/>
            <person name="Seo K.H."/>
            <person name="Kim J.K."/>
            <person name="Bae C.S."/>
            <person name="Kim K.K."/>
        </authorList>
    </citation>
    <scope>INTERACTION WITH PHYHIP</scope>
</reference>
<reference key="8">
    <citation type="journal article" date="2000" name="J. Lipid Res.">
        <title>Phytanoyl-CoA hydroxylase: recognition of 3-methyl-branched acyl-coAs and requirement for GTP or ATP and Mg(2+) in addition to its known hydroxylation cofactors.</title>
        <authorList>
            <person name="Croes K."/>
            <person name="Foulon V."/>
            <person name="Casteels M."/>
            <person name="Van Veldhoven P.P."/>
            <person name="Mannaerts G.P."/>
        </authorList>
    </citation>
    <scope>FUNCTION</scope>
    <scope>CATALYTIC ACTIVITY</scope>
    <scope>COFACTOR</scope>
</reference>
<reference key="9">
    <citation type="journal article" date="2002" name="Chem. Biol.">
        <title>Utilization of sterol carrier protein-2 by phytanoyl-CoA 2-hydroxylase in the peroxisomal alpha oxidation of phytanic acid.</title>
        <authorList>
            <person name="Mukherji M."/>
            <person name="Kershaw N.J."/>
            <person name="Schofield C.J."/>
            <person name="Wierzbicki A.S."/>
            <person name="Lloyd M.D."/>
        </authorList>
    </citation>
    <scope>FUNCTION</scope>
    <scope>CATALYTIC ACTIVITY</scope>
    <scope>BIOPHYSICOCHEMICAL PROPERTIES</scope>
</reference>
<reference key="10">
    <citation type="journal article" date="2003" name="J. Lipid Res.">
        <title>Further studies on the substrate spectrum of phytanoyl-CoA hydroxylase: implications for Refsum disease?</title>
        <authorList>
            <person name="Foulon V."/>
            <person name="Asselberghs S."/>
            <person name="Geens W."/>
            <person name="Mannaerts G.P."/>
            <person name="Casteels M."/>
            <person name="Van Veldhoven P.P."/>
        </authorList>
    </citation>
    <scope>FUNCTION</scope>
    <scope>CATALYTIC ACTIVITY</scope>
    <scope>BIOPHYSICOCHEMICAL PROPERTIES</scope>
</reference>
<reference key="11">
    <citation type="journal article" date="2014" name="J. Proteomics">
        <title>An enzyme assisted RP-RPLC approach for in-depth analysis of human liver phosphoproteome.</title>
        <authorList>
            <person name="Bian Y."/>
            <person name="Song C."/>
            <person name="Cheng K."/>
            <person name="Dong M."/>
            <person name="Wang F."/>
            <person name="Huang J."/>
            <person name="Sun D."/>
            <person name="Wang L."/>
            <person name="Ye M."/>
            <person name="Zou H."/>
        </authorList>
    </citation>
    <scope>PHOSPHORYLATION [LARGE SCALE ANALYSIS] AT SER-317</scope>
    <scope>IDENTIFICATION BY MASS SPECTROMETRY [LARGE SCALE ANALYSIS]</scope>
    <source>
        <tissue>Liver</tissue>
    </source>
</reference>
<reference key="12">
    <citation type="journal article" date="2015" name="Proteomics">
        <title>N-terminome analysis of the human mitochondrial proteome.</title>
        <authorList>
            <person name="Vaca Jacome A.S."/>
            <person name="Rabilloud T."/>
            <person name="Schaeffer-Reiss C."/>
            <person name="Rompais M."/>
            <person name="Ayoub D."/>
            <person name="Lane L."/>
            <person name="Bairoch A."/>
            <person name="Van Dorsselaer A."/>
            <person name="Carapito C."/>
        </authorList>
    </citation>
    <scope>IDENTIFICATION BY MASS SPECTROMETRY [LARGE SCALE ANALYSIS]</scope>
</reference>
<reference key="13">
    <citation type="journal article" date="2005" name="J. Biol. Chem.">
        <title>Structure of human phytanoyl-CoA 2-hydroxylase identifies molecular mechanisms of Refsum disease.</title>
        <authorList>
            <person name="McDonough M.A."/>
            <person name="Kavanagh K.L."/>
            <person name="Butler D."/>
            <person name="Searls T."/>
            <person name="Oppermann U."/>
            <person name="Schofield C.J."/>
        </authorList>
    </citation>
    <scope>X-RAY CRYSTALLOGRAPHY (2.5 ANGSTROMS) OF 31-338 IN COMPLEX WITH IRON AND ALPHA-KETOGLUTARATE</scope>
    <scope>COFACTOR</scope>
    <scope>SUBSTRATE-BINDING SITES</scope>
    <scope>METAL-BINDING SITES</scope>
</reference>
<reference key="14">
    <citation type="journal article" date="2004" name="Hum. Mutat.">
        <title>Molecular basis of Refsum disease: sequence variations in phytanoyl-CoA hydroxylase (PHYH) and the PTS2 receptor (PEX7).</title>
        <authorList>
            <person name="Jansen G.A."/>
            <person name="Waterham H.R."/>
            <person name="Wanders R.J.A."/>
        </authorList>
    </citation>
    <scope>REVIEW</scope>
    <scope>VARIANTS RD TYR-83 AND ARG-175</scope>
</reference>
<reference key="15">
    <citation type="journal article" date="1999" name="Adv. Exp. Med. Biol.">
        <title>Phytanoyl-CoA hydroxylase deficiency. Enzymological and molecular basis of classical Refsum disease.</title>
        <authorList>
            <person name="Jansen G.A."/>
            <person name="Ferdinandusse S."/>
            <person name="Hogenhout E.M."/>
            <person name="Verhoeven N.M."/>
            <person name="Jakobs C."/>
            <person name="Wanders R.J.A."/>
        </authorList>
    </citation>
    <scope>VARIANT RD SER-204</scope>
</reference>
<reference key="16">
    <citation type="journal article" date="2016" name="Nature">
        <title>Analysis of protein-coding genetic variation in 60,706 humans.</title>
        <authorList>
            <consortium name="Exome Aggregation Consortium"/>
            <person name="Lek M."/>
            <person name="Karczewski K.J."/>
            <person name="Minikel E.V."/>
            <person name="Samocha K.E."/>
            <person name="Banks E."/>
            <person name="Fennell T."/>
            <person name="O'Donnell-Luria A.H."/>
            <person name="Ware J.S."/>
            <person name="Hill A.J."/>
            <person name="Cummings B.B."/>
            <person name="Tukiainen T."/>
            <person name="Birnbaum D.P."/>
            <person name="Kosmicki J.A."/>
            <person name="Duncan L.E."/>
            <person name="Estrada K."/>
            <person name="Zhao F."/>
            <person name="Zou J."/>
            <person name="Pierce-Hoffman E."/>
            <person name="Berghout J."/>
            <person name="Cooper D.N."/>
            <person name="Deflaux N."/>
            <person name="DePristo M."/>
            <person name="Do R."/>
            <person name="Flannick J."/>
            <person name="Fromer M."/>
            <person name="Gauthier L."/>
            <person name="Goldstein J."/>
            <person name="Gupta N."/>
            <person name="Howrigan D."/>
            <person name="Kiezun A."/>
            <person name="Kurki M.I."/>
            <person name="Moonshine A.L."/>
            <person name="Natarajan P."/>
            <person name="Orozco L."/>
            <person name="Peloso G.M."/>
            <person name="Poplin R."/>
            <person name="Rivas M.A."/>
            <person name="Ruano-Rubio V."/>
            <person name="Rose S.A."/>
            <person name="Ruderfer D.M."/>
            <person name="Shakir K."/>
            <person name="Stenson P.D."/>
            <person name="Stevens C."/>
            <person name="Thomas B.P."/>
            <person name="Tiao G."/>
            <person name="Tusie-Luna M.T."/>
            <person name="Weisburd B."/>
            <person name="Won H.H."/>
            <person name="Yu D."/>
            <person name="Altshuler D.M."/>
            <person name="Ardissino D."/>
            <person name="Boehnke M."/>
            <person name="Danesh J."/>
            <person name="Donnelly S."/>
            <person name="Elosua R."/>
            <person name="Florez J.C."/>
            <person name="Gabriel S.B."/>
            <person name="Getz G."/>
            <person name="Glatt S.J."/>
            <person name="Hultman C.M."/>
            <person name="Kathiresan S."/>
            <person name="Laakso M."/>
            <person name="McCarroll S."/>
            <person name="McCarthy M.I."/>
            <person name="McGovern D."/>
            <person name="McPherson R."/>
            <person name="Neale B.M."/>
            <person name="Palotie A."/>
            <person name="Purcell S.M."/>
            <person name="Saleheen D."/>
            <person name="Scharf J.M."/>
            <person name="Sklar P."/>
            <person name="Sullivan P.F."/>
            <person name="Tuomilehto J."/>
            <person name="Tsuang M.T."/>
            <person name="Watkins H.C."/>
            <person name="Wilson J.G."/>
            <person name="Daly M.J."/>
            <person name="MacArthur D.G."/>
        </authorList>
    </citation>
    <scope>VARIANT GLN-245</scope>
</reference>
<gene>
    <name type="primary">PHYH</name>
    <name type="synonym">PAHX</name>
</gene>
<sequence length="338" mass="38538">MEQLRAAARLQIVLGHLGRPSAGAVVAHPTSGTISSASFHPQQFQYTLDNNVLTLEQRKFYEENGFLVIKNLVPDADIQRFRNEFEKICRKEVKPLGLTVMRDVTISKSEYAPSEKMITKVQDFQEDKELFRYCTLPEILKYVECFTGPNIMAMHTMLINKPPDSGKKTSRHPLHQDLHYFPFRPSDLIVCAWTAMEHISRNNGCLVVLPGTHKGSLKPHDYPKWEGGVNKMFHGIQDYEENKARVHLVMEKGDTVFFHPLLIHGSGQNKTQGFRKAISCHFASADCHYIDVKGTSQENIEKEVVGIAHKFFGAENSVNLKDIWMFRARLVKGERTNL</sequence>
<organism>
    <name type="scientific">Homo sapiens</name>
    <name type="common">Human</name>
    <dbReference type="NCBI Taxonomy" id="9606"/>
    <lineage>
        <taxon>Eukaryota</taxon>
        <taxon>Metazoa</taxon>
        <taxon>Chordata</taxon>
        <taxon>Craniata</taxon>
        <taxon>Vertebrata</taxon>
        <taxon>Euteleostomi</taxon>
        <taxon>Mammalia</taxon>
        <taxon>Eutheria</taxon>
        <taxon>Euarchontoglires</taxon>
        <taxon>Primates</taxon>
        <taxon>Haplorrhini</taxon>
        <taxon>Catarrhini</taxon>
        <taxon>Hominidae</taxon>
        <taxon>Homo</taxon>
    </lineage>
</organism>
<evidence type="ECO:0000250" key="1">
    <source>
        <dbReference type="UniProtKB" id="O35386"/>
    </source>
</evidence>
<evidence type="ECO:0000250" key="2">
    <source>
        <dbReference type="UniProtKB" id="P57093"/>
    </source>
</evidence>
<evidence type="ECO:0000269" key="3">
    <source>
    </source>
</evidence>
<evidence type="ECO:0000269" key="4">
    <source>
    </source>
</evidence>
<evidence type="ECO:0000269" key="5">
    <source>
    </source>
</evidence>
<evidence type="ECO:0000269" key="6">
    <source>
    </source>
</evidence>
<evidence type="ECO:0000269" key="7">
    <source>
    </source>
</evidence>
<evidence type="ECO:0000269" key="8">
    <source>
    </source>
</evidence>
<evidence type="ECO:0000269" key="9">
    <source>
    </source>
</evidence>
<evidence type="ECO:0000269" key="10">
    <source>
    </source>
</evidence>
<evidence type="ECO:0000269" key="11">
    <source>
    </source>
</evidence>
<evidence type="ECO:0000269" key="12">
    <source>
    </source>
</evidence>
<evidence type="ECO:0000269" key="13">
    <source>
    </source>
</evidence>
<evidence type="ECO:0000269" key="14">
    <source>
    </source>
</evidence>
<evidence type="ECO:0000305" key="15"/>
<evidence type="ECO:0000305" key="16">
    <source>
    </source>
</evidence>
<evidence type="ECO:0000305" key="17">
    <source>
    </source>
</evidence>
<evidence type="ECO:0000305" key="18">
    <source>
    </source>
</evidence>
<evidence type="ECO:0000305" key="19">
    <source>
    </source>
</evidence>
<evidence type="ECO:0007744" key="20">
    <source>
    </source>
</evidence>
<evidence type="ECO:0007829" key="21">
    <source>
        <dbReference type="PDB" id="2A1X"/>
    </source>
</evidence>
<keyword id="KW-0002">3D-structure</keyword>
<keyword id="KW-0025">Alternative splicing</keyword>
<keyword id="KW-0898">Cataract</keyword>
<keyword id="KW-0209">Deafness</keyword>
<keyword id="KW-0223">Dioxygenase</keyword>
<keyword id="KW-0225">Disease variant</keyword>
<keyword id="KW-0977">Ichthyosis</keyword>
<keyword id="KW-0408">Iron</keyword>
<keyword id="KW-0479">Metal-binding</keyword>
<keyword id="KW-0560">Oxidoreductase</keyword>
<keyword id="KW-0576">Peroxisome</keyword>
<keyword id="KW-0958">Peroxisome biogenesis disorder</keyword>
<keyword id="KW-0597">Phosphoprotein</keyword>
<keyword id="KW-1267">Proteomics identification</keyword>
<keyword id="KW-1185">Reference proteome</keyword>
<keyword id="KW-0682">Retinitis pigmentosa</keyword>
<keyword id="KW-0809">Transit peptide</keyword>
<keyword id="KW-0847">Vitamin C</keyword>
<protein>
    <recommendedName>
        <fullName>Phytanoyl-CoA dioxygenase, peroxisomal</fullName>
        <ecNumber evidence="7 8 13">1.14.11.18</ecNumber>
    </recommendedName>
    <alternativeName>
        <fullName>Phytanic acid oxidase</fullName>
    </alternativeName>
    <alternativeName>
        <fullName>Phytanoyl-CoA alpha-hydroxylase</fullName>
        <shortName>PhyH</shortName>
    </alternativeName>
</protein>
<proteinExistence type="evidence at protein level"/>